<dbReference type="EC" id="2.1.3.2" evidence="1"/>
<dbReference type="EMBL" id="CP001098">
    <property type="protein sequence ID" value="ACL69693.1"/>
    <property type="molecule type" value="Genomic_DNA"/>
</dbReference>
<dbReference type="RefSeq" id="WP_012635879.1">
    <property type="nucleotide sequence ID" value="NC_011899.1"/>
</dbReference>
<dbReference type="SMR" id="B8CWM4"/>
<dbReference type="STRING" id="373903.Hore_09370"/>
<dbReference type="KEGG" id="hor:Hore_09370"/>
<dbReference type="eggNOG" id="COG0540">
    <property type="taxonomic scope" value="Bacteria"/>
</dbReference>
<dbReference type="HOGENOM" id="CLU_043846_2_0_9"/>
<dbReference type="OrthoDB" id="9802587at2"/>
<dbReference type="UniPathway" id="UPA00070">
    <property type="reaction ID" value="UER00116"/>
</dbReference>
<dbReference type="Proteomes" id="UP000000719">
    <property type="component" value="Chromosome"/>
</dbReference>
<dbReference type="GO" id="GO:0005829">
    <property type="term" value="C:cytosol"/>
    <property type="evidence" value="ECO:0007669"/>
    <property type="project" value="TreeGrafter"/>
</dbReference>
<dbReference type="GO" id="GO:0016597">
    <property type="term" value="F:amino acid binding"/>
    <property type="evidence" value="ECO:0007669"/>
    <property type="project" value="InterPro"/>
</dbReference>
<dbReference type="GO" id="GO:0004070">
    <property type="term" value="F:aspartate carbamoyltransferase activity"/>
    <property type="evidence" value="ECO:0007669"/>
    <property type="project" value="UniProtKB-UniRule"/>
</dbReference>
<dbReference type="GO" id="GO:0006207">
    <property type="term" value="P:'de novo' pyrimidine nucleobase biosynthetic process"/>
    <property type="evidence" value="ECO:0007669"/>
    <property type="project" value="InterPro"/>
</dbReference>
<dbReference type="GO" id="GO:0044205">
    <property type="term" value="P:'de novo' UMP biosynthetic process"/>
    <property type="evidence" value="ECO:0007669"/>
    <property type="project" value="UniProtKB-UniRule"/>
</dbReference>
<dbReference type="GO" id="GO:0006520">
    <property type="term" value="P:amino acid metabolic process"/>
    <property type="evidence" value="ECO:0007669"/>
    <property type="project" value="InterPro"/>
</dbReference>
<dbReference type="FunFam" id="3.40.50.1370:FF:000007">
    <property type="entry name" value="Aspartate carbamoyltransferase"/>
    <property type="match status" value="1"/>
</dbReference>
<dbReference type="Gene3D" id="3.40.50.1370">
    <property type="entry name" value="Aspartate/ornithine carbamoyltransferase"/>
    <property type="match status" value="2"/>
</dbReference>
<dbReference type="HAMAP" id="MF_00001">
    <property type="entry name" value="Asp_carb_tr"/>
    <property type="match status" value="1"/>
</dbReference>
<dbReference type="InterPro" id="IPR006132">
    <property type="entry name" value="Asp/Orn_carbamoyltranf_P-bd"/>
</dbReference>
<dbReference type="InterPro" id="IPR006130">
    <property type="entry name" value="Asp/Orn_carbamoylTrfase"/>
</dbReference>
<dbReference type="InterPro" id="IPR036901">
    <property type="entry name" value="Asp/Orn_carbamoylTrfase_sf"/>
</dbReference>
<dbReference type="InterPro" id="IPR002082">
    <property type="entry name" value="Asp_carbamoyltransf"/>
</dbReference>
<dbReference type="InterPro" id="IPR006131">
    <property type="entry name" value="Asp_carbamoyltransf_Asp/Orn-bd"/>
</dbReference>
<dbReference type="NCBIfam" id="TIGR00670">
    <property type="entry name" value="asp_carb_tr"/>
    <property type="match status" value="1"/>
</dbReference>
<dbReference type="NCBIfam" id="NF002032">
    <property type="entry name" value="PRK00856.1"/>
    <property type="match status" value="1"/>
</dbReference>
<dbReference type="PANTHER" id="PTHR45753:SF6">
    <property type="entry name" value="ASPARTATE CARBAMOYLTRANSFERASE"/>
    <property type="match status" value="1"/>
</dbReference>
<dbReference type="PANTHER" id="PTHR45753">
    <property type="entry name" value="ORNITHINE CARBAMOYLTRANSFERASE, MITOCHONDRIAL"/>
    <property type="match status" value="1"/>
</dbReference>
<dbReference type="Pfam" id="PF00185">
    <property type="entry name" value="OTCace"/>
    <property type="match status" value="1"/>
</dbReference>
<dbReference type="Pfam" id="PF02729">
    <property type="entry name" value="OTCace_N"/>
    <property type="match status" value="1"/>
</dbReference>
<dbReference type="PRINTS" id="PR00100">
    <property type="entry name" value="AOTCASE"/>
</dbReference>
<dbReference type="PRINTS" id="PR00101">
    <property type="entry name" value="ATCASE"/>
</dbReference>
<dbReference type="SUPFAM" id="SSF53671">
    <property type="entry name" value="Aspartate/ornithine carbamoyltransferase"/>
    <property type="match status" value="1"/>
</dbReference>
<dbReference type="PROSITE" id="PS00097">
    <property type="entry name" value="CARBAMOYLTRANSFERASE"/>
    <property type="match status" value="1"/>
</dbReference>
<comment type="function">
    <text evidence="1">Catalyzes the condensation of carbamoyl phosphate and aspartate to form carbamoyl aspartate and inorganic phosphate, the committed step in the de novo pyrimidine nucleotide biosynthesis pathway.</text>
</comment>
<comment type="catalytic activity">
    <reaction evidence="1">
        <text>carbamoyl phosphate + L-aspartate = N-carbamoyl-L-aspartate + phosphate + H(+)</text>
        <dbReference type="Rhea" id="RHEA:20013"/>
        <dbReference type="ChEBI" id="CHEBI:15378"/>
        <dbReference type="ChEBI" id="CHEBI:29991"/>
        <dbReference type="ChEBI" id="CHEBI:32814"/>
        <dbReference type="ChEBI" id="CHEBI:43474"/>
        <dbReference type="ChEBI" id="CHEBI:58228"/>
        <dbReference type="EC" id="2.1.3.2"/>
    </reaction>
</comment>
<comment type="pathway">
    <text evidence="1">Pyrimidine metabolism; UMP biosynthesis via de novo pathway; (S)-dihydroorotate from bicarbonate: step 2/3.</text>
</comment>
<comment type="subunit">
    <text evidence="1">Heterododecamer (2C3:3R2) of six catalytic PyrB chains organized as two trimers (C3), and six regulatory PyrI chains organized as three dimers (R2).</text>
</comment>
<comment type="similarity">
    <text evidence="1">Belongs to the aspartate/ornithine carbamoyltransferase superfamily. ATCase family.</text>
</comment>
<reference key="1">
    <citation type="journal article" date="2009" name="PLoS ONE">
        <title>Genome analysis of the anaerobic thermohalophilic bacterium Halothermothrix orenii.</title>
        <authorList>
            <person name="Mavromatis K."/>
            <person name="Ivanova N."/>
            <person name="Anderson I."/>
            <person name="Lykidis A."/>
            <person name="Hooper S.D."/>
            <person name="Sun H."/>
            <person name="Kunin V."/>
            <person name="Lapidus A."/>
            <person name="Hugenholtz P."/>
            <person name="Patel B."/>
            <person name="Kyrpides N.C."/>
        </authorList>
    </citation>
    <scope>NUCLEOTIDE SEQUENCE [LARGE SCALE GENOMIC DNA]</scope>
    <source>
        <strain>H 168 / OCM 544 / DSM 9562</strain>
    </source>
</reference>
<proteinExistence type="inferred from homology"/>
<gene>
    <name evidence="1" type="primary">pyrB</name>
    <name type="ordered locus">Hore_09370</name>
</gene>
<sequence length="313" mass="34551">MALKRKDFLGLYNVEADEINEILDTAQAMKEIFTRTVKKVPTLRGKTIINLFFEPSTRTKSSFDIAAKRLSADVMSISKSSSSVAKGETLLDTARTLEVMGADVVVVRHSAPGAARFLAENLSASVLNAGDGAHAHPTQALLDMYTIKEKMGKIEGLNVLIIGDIAHSRVARSNIWGLTKLGARVRVVGPGTLIPRDIEEMGVEVYRDLDEALEGVDVVNILRIQLERQQKGLFPSIREYRHFYGMNEVRLRKLEDRALVMHPGPMNRGIEIESIVADGEQSVITEQVTNGVAIRMALLYLLAGREINDEDLA</sequence>
<accession>B8CWM4</accession>
<protein>
    <recommendedName>
        <fullName evidence="1">Aspartate carbamoyltransferase catalytic subunit</fullName>
        <ecNumber evidence="1">2.1.3.2</ecNumber>
    </recommendedName>
    <alternativeName>
        <fullName evidence="1">Aspartate transcarbamylase</fullName>
        <shortName evidence="1">ATCase</shortName>
    </alternativeName>
</protein>
<organism>
    <name type="scientific">Halothermothrix orenii (strain H 168 / OCM 544 / DSM 9562)</name>
    <dbReference type="NCBI Taxonomy" id="373903"/>
    <lineage>
        <taxon>Bacteria</taxon>
        <taxon>Bacillati</taxon>
        <taxon>Bacillota</taxon>
        <taxon>Clostridia</taxon>
        <taxon>Halanaerobiales</taxon>
        <taxon>Halothermotrichaceae</taxon>
        <taxon>Halothermothrix</taxon>
    </lineage>
</organism>
<keyword id="KW-0665">Pyrimidine biosynthesis</keyword>
<keyword id="KW-1185">Reference proteome</keyword>
<keyword id="KW-0808">Transferase</keyword>
<evidence type="ECO:0000255" key="1">
    <source>
        <dbReference type="HAMAP-Rule" id="MF_00001"/>
    </source>
</evidence>
<feature type="chain" id="PRO_1000116145" description="Aspartate carbamoyltransferase catalytic subunit">
    <location>
        <begin position="1"/>
        <end position="313"/>
    </location>
</feature>
<feature type="binding site" evidence="1">
    <location>
        <position position="58"/>
    </location>
    <ligand>
        <name>carbamoyl phosphate</name>
        <dbReference type="ChEBI" id="CHEBI:58228"/>
    </ligand>
</feature>
<feature type="binding site" evidence="1">
    <location>
        <position position="59"/>
    </location>
    <ligand>
        <name>carbamoyl phosphate</name>
        <dbReference type="ChEBI" id="CHEBI:58228"/>
    </ligand>
</feature>
<feature type="binding site" evidence="1">
    <location>
        <position position="86"/>
    </location>
    <ligand>
        <name>L-aspartate</name>
        <dbReference type="ChEBI" id="CHEBI:29991"/>
    </ligand>
</feature>
<feature type="binding site" evidence="1">
    <location>
        <position position="108"/>
    </location>
    <ligand>
        <name>carbamoyl phosphate</name>
        <dbReference type="ChEBI" id="CHEBI:58228"/>
    </ligand>
</feature>
<feature type="binding site" evidence="1">
    <location>
        <position position="136"/>
    </location>
    <ligand>
        <name>carbamoyl phosphate</name>
        <dbReference type="ChEBI" id="CHEBI:58228"/>
    </ligand>
</feature>
<feature type="binding site" evidence="1">
    <location>
        <position position="139"/>
    </location>
    <ligand>
        <name>carbamoyl phosphate</name>
        <dbReference type="ChEBI" id="CHEBI:58228"/>
    </ligand>
</feature>
<feature type="binding site" evidence="1">
    <location>
        <position position="169"/>
    </location>
    <ligand>
        <name>L-aspartate</name>
        <dbReference type="ChEBI" id="CHEBI:29991"/>
    </ligand>
</feature>
<feature type="binding site" evidence="1">
    <location>
        <position position="223"/>
    </location>
    <ligand>
        <name>L-aspartate</name>
        <dbReference type="ChEBI" id="CHEBI:29991"/>
    </ligand>
</feature>
<feature type="binding site" evidence="1">
    <location>
        <position position="264"/>
    </location>
    <ligand>
        <name>carbamoyl phosphate</name>
        <dbReference type="ChEBI" id="CHEBI:58228"/>
    </ligand>
</feature>
<feature type="binding site" evidence="1">
    <location>
        <position position="265"/>
    </location>
    <ligand>
        <name>carbamoyl phosphate</name>
        <dbReference type="ChEBI" id="CHEBI:58228"/>
    </ligand>
</feature>
<name>PYRB_HALOH</name>